<keyword id="KW-0150">Chloroplast</keyword>
<keyword id="KW-0934">Plastid</keyword>
<keyword id="KW-0687">Ribonucleoprotein</keyword>
<keyword id="KW-0689">Ribosomal protein</keyword>
<keyword id="KW-0694">RNA-binding</keyword>
<keyword id="KW-0699">rRNA-binding</keyword>
<proteinExistence type="inferred from homology"/>
<protein>
    <recommendedName>
        <fullName evidence="3">Small ribosomal subunit protein uS4c</fullName>
    </recommendedName>
    <alternativeName>
        <fullName>30S ribosomal protein S4, chloroplastic</fullName>
    </alternativeName>
</protein>
<dbReference type="EMBL" id="EF380352">
    <property type="protein sequence ID" value="ABQ43262.1"/>
    <property type="molecule type" value="Genomic_DNA"/>
</dbReference>
<dbReference type="RefSeq" id="YP_001294100.1">
    <property type="nucleotide sequence ID" value="NC_009598.1"/>
</dbReference>
<dbReference type="SMR" id="A6MMC4"/>
<dbReference type="GeneID" id="5236460"/>
<dbReference type="GO" id="GO:0009507">
    <property type="term" value="C:chloroplast"/>
    <property type="evidence" value="ECO:0007669"/>
    <property type="project" value="UniProtKB-SubCell"/>
</dbReference>
<dbReference type="GO" id="GO:0015935">
    <property type="term" value="C:small ribosomal subunit"/>
    <property type="evidence" value="ECO:0007669"/>
    <property type="project" value="InterPro"/>
</dbReference>
<dbReference type="GO" id="GO:0019843">
    <property type="term" value="F:rRNA binding"/>
    <property type="evidence" value="ECO:0007669"/>
    <property type="project" value="UniProtKB-UniRule"/>
</dbReference>
<dbReference type="GO" id="GO:0003735">
    <property type="term" value="F:structural constituent of ribosome"/>
    <property type="evidence" value="ECO:0007669"/>
    <property type="project" value="InterPro"/>
</dbReference>
<dbReference type="GO" id="GO:0042274">
    <property type="term" value="P:ribosomal small subunit biogenesis"/>
    <property type="evidence" value="ECO:0007669"/>
    <property type="project" value="TreeGrafter"/>
</dbReference>
<dbReference type="GO" id="GO:0006412">
    <property type="term" value="P:translation"/>
    <property type="evidence" value="ECO:0007669"/>
    <property type="project" value="UniProtKB-UniRule"/>
</dbReference>
<dbReference type="CDD" id="cd00165">
    <property type="entry name" value="S4"/>
    <property type="match status" value="1"/>
</dbReference>
<dbReference type="FunFam" id="1.10.1050.10:FF:000002">
    <property type="entry name" value="30S ribosomal protein S4, chloroplastic"/>
    <property type="match status" value="1"/>
</dbReference>
<dbReference type="FunFam" id="3.10.290.10:FF:000081">
    <property type="entry name" value="30S ribosomal protein S4, chloroplastic"/>
    <property type="match status" value="1"/>
</dbReference>
<dbReference type="Gene3D" id="1.10.1050.10">
    <property type="entry name" value="Ribosomal Protein S4 Delta 41, Chain A, domain 1"/>
    <property type="match status" value="1"/>
</dbReference>
<dbReference type="Gene3D" id="3.10.290.10">
    <property type="entry name" value="RNA-binding S4 domain"/>
    <property type="match status" value="1"/>
</dbReference>
<dbReference type="HAMAP" id="MF_01306_B">
    <property type="entry name" value="Ribosomal_uS4_B"/>
    <property type="match status" value="1"/>
</dbReference>
<dbReference type="InterPro" id="IPR022801">
    <property type="entry name" value="Ribosomal_uS4"/>
</dbReference>
<dbReference type="InterPro" id="IPR005709">
    <property type="entry name" value="Ribosomal_uS4_bac-type"/>
</dbReference>
<dbReference type="InterPro" id="IPR018079">
    <property type="entry name" value="Ribosomal_uS4_CS"/>
</dbReference>
<dbReference type="InterPro" id="IPR001912">
    <property type="entry name" value="Ribosomal_uS4_N"/>
</dbReference>
<dbReference type="InterPro" id="IPR002942">
    <property type="entry name" value="S4_RNA-bd"/>
</dbReference>
<dbReference type="InterPro" id="IPR036986">
    <property type="entry name" value="S4_RNA-bd_sf"/>
</dbReference>
<dbReference type="NCBIfam" id="NF003717">
    <property type="entry name" value="PRK05327.1"/>
    <property type="match status" value="1"/>
</dbReference>
<dbReference type="NCBIfam" id="TIGR01017">
    <property type="entry name" value="rpsD_bact"/>
    <property type="match status" value="1"/>
</dbReference>
<dbReference type="PANTHER" id="PTHR11831">
    <property type="entry name" value="30S 40S RIBOSOMAL PROTEIN"/>
    <property type="match status" value="1"/>
</dbReference>
<dbReference type="PANTHER" id="PTHR11831:SF4">
    <property type="entry name" value="SMALL RIBOSOMAL SUBUNIT PROTEIN US4M"/>
    <property type="match status" value="1"/>
</dbReference>
<dbReference type="Pfam" id="PF00163">
    <property type="entry name" value="Ribosomal_S4"/>
    <property type="match status" value="1"/>
</dbReference>
<dbReference type="Pfam" id="PF01479">
    <property type="entry name" value="S4"/>
    <property type="match status" value="1"/>
</dbReference>
<dbReference type="SMART" id="SM01390">
    <property type="entry name" value="Ribosomal_S4"/>
    <property type="match status" value="1"/>
</dbReference>
<dbReference type="SMART" id="SM00363">
    <property type="entry name" value="S4"/>
    <property type="match status" value="1"/>
</dbReference>
<dbReference type="SUPFAM" id="SSF55174">
    <property type="entry name" value="Alpha-L RNA-binding motif"/>
    <property type="match status" value="1"/>
</dbReference>
<dbReference type="PROSITE" id="PS00632">
    <property type="entry name" value="RIBOSOMAL_S4"/>
    <property type="match status" value="1"/>
</dbReference>
<dbReference type="PROSITE" id="PS50889">
    <property type="entry name" value="S4"/>
    <property type="match status" value="1"/>
</dbReference>
<reference key="1">
    <citation type="journal article" date="2007" name="Mol. Phylogenet. Evol.">
        <title>Phylogenetic and evolutionary implications of complete chloroplast genome sequences of four early-diverging angiosperms: Buxus (Buxaceae), Chloranthus (Chloranthaceae), Dioscorea (Dioscoreaceae), and Illicium (Schisandraceae).</title>
        <authorList>
            <person name="Hansen D.R."/>
            <person name="Dastidar S.G."/>
            <person name="Cai Z."/>
            <person name="Penaflor C."/>
            <person name="Kuehl J.V."/>
            <person name="Boore J.L."/>
            <person name="Jansen R.K."/>
        </authorList>
    </citation>
    <scope>NUCLEOTIDE SEQUENCE [LARGE SCALE GENOMIC DNA]</scope>
</reference>
<feature type="chain" id="PRO_0000322364" description="Small ribosomal subunit protein uS4c">
    <location>
        <begin position="1"/>
        <end position="201"/>
    </location>
</feature>
<feature type="domain" description="S4 RNA-binding">
    <location>
        <begin position="89"/>
        <end position="152"/>
    </location>
</feature>
<feature type="region of interest" description="Disordered" evidence="2">
    <location>
        <begin position="16"/>
        <end position="37"/>
    </location>
</feature>
<gene>
    <name type="primary">rps4</name>
</gene>
<comment type="function">
    <text evidence="1">One of the primary rRNA binding proteins, it binds directly to 16S rRNA where it nucleates assembly of the body of the 30S subunit.</text>
</comment>
<comment type="function">
    <text evidence="1">With S5 and S12 plays an important role in translational accuracy.</text>
</comment>
<comment type="subunit">
    <text evidence="1">Part of the 30S ribosomal subunit. Contacts protein S5. The interaction surface between S4 and S5 is involved in control of translational fidelity (By similarity).</text>
</comment>
<comment type="subcellular location">
    <subcellularLocation>
        <location>Plastid</location>
        <location>Chloroplast</location>
    </subcellularLocation>
</comment>
<comment type="similarity">
    <text evidence="3">Belongs to the universal ribosomal protein uS4 family.</text>
</comment>
<evidence type="ECO:0000250" key="1"/>
<evidence type="ECO:0000256" key="2">
    <source>
        <dbReference type="SAM" id="MobiDB-lite"/>
    </source>
</evidence>
<evidence type="ECO:0000305" key="3"/>
<geneLocation type="chloroplast"/>
<organism>
    <name type="scientific">Chloranthus spicatus</name>
    <name type="common">Chulantree</name>
    <name type="synonym">Nigrina spicata</name>
    <dbReference type="NCBI Taxonomy" id="13006"/>
    <lineage>
        <taxon>Eukaryota</taxon>
        <taxon>Viridiplantae</taxon>
        <taxon>Streptophyta</taxon>
        <taxon>Embryophyta</taxon>
        <taxon>Tracheophyta</taxon>
        <taxon>Spermatophyta</taxon>
        <taxon>Magnoliopsida</taxon>
        <taxon>Chloranthales</taxon>
        <taxon>Chloranthaceae</taxon>
        <taxon>Chloranthus</taxon>
    </lineage>
</organism>
<name>RR4_CHLSC</name>
<sequence>MSRYRGPRFKKIRRLGALPGLTSKRPRSGSDLRNQSRFGKRSQYRIRLEEKQKLRFHYGLTERQLLRYVRIAGKAKGSTGQVLLQLLEMRLDNTLFRLGMASTIPGARQLVNHRHILVNSRIVDIPSYRCKPRDIITTRDEQRSRTLIQNHIDSSPHEELPKHLTLHSFQYKGLVNQIIDSKSIGLKINELLVVEYYSRQT</sequence>
<accession>A6MMC4</accession>